<organism>
    <name type="scientific">Rhodobacter capsulatus (strain ATCC BAA-309 / NBRC 16581 / SB1003)</name>
    <dbReference type="NCBI Taxonomy" id="272942"/>
    <lineage>
        <taxon>Bacteria</taxon>
        <taxon>Pseudomonadati</taxon>
        <taxon>Pseudomonadota</taxon>
        <taxon>Alphaproteobacteria</taxon>
        <taxon>Rhodobacterales</taxon>
        <taxon>Rhodobacter group</taxon>
        <taxon>Rhodobacter</taxon>
    </lineage>
</organism>
<name>COBB_RHOCB</name>
<feature type="chain" id="PRO_0000141268" description="Hydrogenobyrinate a,c-diamide synthase">
    <location>
        <begin position="1"/>
        <end position="435"/>
    </location>
</feature>
<feature type="domain" description="GATase cobBQ-type" evidence="1">
    <location>
        <begin position="247"/>
        <end position="435"/>
    </location>
</feature>
<feature type="active site" description="Nucleophile" evidence="1">
    <location>
        <position position="329"/>
    </location>
</feature>
<feature type="site" description="Increases nucleophilicity of active site Cys" evidence="1">
    <location>
        <position position="431"/>
    </location>
</feature>
<keyword id="KW-0067">ATP-binding</keyword>
<keyword id="KW-0169">Cobalamin biosynthesis</keyword>
<keyword id="KW-0315">Glutamine amidotransferase</keyword>
<keyword id="KW-0436">Ligase</keyword>
<keyword id="KW-0460">Magnesium</keyword>
<keyword id="KW-0547">Nucleotide-binding</keyword>
<keyword id="KW-1185">Reference proteome</keyword>
<dbReference type="EC" id="6.3.5.9" evidence="1"/>
<dbReference type="EMBL" id="AF010496">
    <property type="protein sequence ID" value="AAC16198.1"/>
    <property type="molecule type" value="Genomic_DNA"/>
</dbReference>
<dbReference type="EMBL" id="CP001312">
    <property type="protein sequence ID" value="ADE85776.1"/>
    <property type="molecule type" value="Genomic_DNA"/>
</dbReference>
<dbReference type="PIR" id="T03545">
    <property type="entry name" value="T03545"/>
</dbReference>
<dbReference type="RefSeq" id="WP_013067755.1">
    <property type="nucleotide sequence ID" value="NC_014034.1"/>
</dbReference>
<dbReference type="SMR" id="O68108"/>
<dbReference type="STRING" id="272942.RCAP_rcc02032"/>
<dbReference type="GeneID" id="31490895"/>
<dbReference type="KEGG" id="rcp:RCAP_rcc02032"/>
<dbReference type="eggNOG" id="COG1797">
    <property type="taxonomic scope" value="Bacteria"/>
</dbReference>
<dbReference type="HOGENOM" id="CLU_022752_0_0_5"/>
<dbReference type="OrthoDB" id="9764035at2"/>
<dbReference type="UniPathway" id="UPA00148">
    <property type="reaction ID" value="UER00220"/>
</dbReference>
<dbReference type="Proteomes" id="UP000002361">
    <property type="component" value="Chromosome"/>
</dbReference>
<dbReference type="GO" id="GO:0005524">
    <property type="term" value="F:ATP binding"/>
    <property type="evidence" value="ECO:0007669"/>
    <property type="project" value="UniProtKB-UniRule"/>
</dbReference>
<dbReference type="GO" id="GO:0042242">
    <property type="term" value="F:cobyrinic acid a,c-diamide synthase activity"/>
    <property type="evidence" value="ECO:0007669"/>
    <property type="project" value="InterPro"/>
</dbReference>
<dbReference type="GO" id="GO:0043802">
    <property type="term" value="F:hydrogenobyrinic acid a,c-diamide synthase (glutamine-hydrolysing) activity"/>
    <property type="evidence" value="ECO:0007669"/>
    <property type="project" value="UniProtKB-UniRule"/>
</dbReference>
<dbReference type="GO" id="GO:0009236">
    <property type="term" value="P:cobalamin biosynthetic process"/>
    <property type="evidence" value="ECO:0007669"/>
    <property type="project" value="UniProtKB-UniRule"/>
</dbReference>
<dbReference type="Gene3D" id="3.40.50.300">
    <property type="entry name" value="P-loop containing nucleotide triphosphate hydrolases"/>
    <property type="match status" value="2"/>
</dbReference>
<dbReference type="HAMAP" id="MF_00027">
    <property type="entry name" value="CobB_CbiA"/>
    <property type="match status" value="1"/>
</dbReference>
<dbReference type="InterPro" id="IPR004484">
    <property type="entry name" value="CbiA/CobB_synth"/>
</dbReference>
<dbReference type="InterPro" id="IPR029062">
    <property type="entry name" value="Class_I_gatase-like"/>
</dbReference>
<dbReference type="InterPro" id="IPR002586">
    <property type="entry name" value="CobQ/CobB/MinD/ParA_Nub-bd_dom"/>
</dbReference>
<dbReference type="InterPro" id="IPR011698">
    <property type="entry name" value="GATase_3"/>
</dbReference>
<dbReference type="InterPro" id="IPR027417">
    <property type="entry name" value="P-loop_NTPase"/>
</dbReference>
<dbReference type="NCBIfam" id="TIGR00379">
    <property type="entry name" value="cobB"/>
    <property type="match status" value="1"/>
</dbReference>
<dbReference type="NCBIfam" id="NF002204">
    <property type="entry name" value="PRK01077.1"/>
    <property type="match status" value="1"/>
</dbReference>
<dbReference type="PANTHER" id="PTHR43873">
    <property type="entry name" value="COBYRINATE A,C-DIAMIDE SYNTHASE"/>
    <property type="match status" value="1"/>
</dbReference>
<dbReference type="PANTHER" id="PTHR43873:SF1">
    <property type="entry name" value="COBYRINATE A,C-DIAMIDE SYNTHASE"/>
    <property type="match status" value="1"/>
</dbReference>
<dbReference type="Pfam" id="PF01656">
    <property type="entry name" value="CbiA"/>
    <property type="match status" value="1"/>
</dbReference>
<dbReference type="Pfam" id="PF07685">
    <property type="entry name" value="GATase_3"/>
    <property type="match status" value="1"/>
</dbReference>
<dbReference type="SUPFAM" id="SSF52317">
    <property type="entry name" value="Class I glutamine amidotransferase-like"/>
    <property type="match status" value="1"/>
</dbReference>
<dbReference type="SUPFAM" id="SSF52540">
    <property type="entry name" value="P-loop containing nucleoside triphosphate hydrolases"/>
    <property type="match status" value="1"/>
</dbReference>
<dbReference type="PROSITE" id="PS51274">
    <property type="entry name" value="GATASE_COBBQ"/>
    <property type="match status" value="1"/>
</dbReference>
<evidence type="ECO:0000255" key="1">
    <source>
        <dbReference type="HAMAP-Rule" id="MF_00027"/>
    </source>
</evidence>
<reference key="1">
    <citation type="journal article" date="1997" name="Proc. Natl. Acad. Sci. U.S.A.">
        <title>Sequence of a 189-kb segment of the chromosome of Rhodobacter capsulatus SB1003.</title>
        <authorList>
            <person name="Vlcek C."/>
            <person name="Paces V."/>
            <person name="Maltsev N."/>
            <person name="Paces J."/>
            <person name="Haselkorn R."/>
            <person name="Fonstein M."/>
        </authorList>
    </citation>
    <scope>NUCLEOTIDE SEQUENCE [GENOMIC DNA]</scope>
    <source>
        <strain>ATCC BAA-309 / NBRC 16581 / SB1003</strain>
    </source>
</reference>
<reference key="2">
    <citation type="journal article" date="2010" name="J. Bacteriol.">
        <title>Complete genome sequence of the photosynthetic purple nonsulfur bacterium Rhodobacter capsulatus SB 1003.</title>
        <authorList>
            <person name="Strnad H."/>
            <person name="Lapidus A."/>
            <person name="Paces J."/>
            <person name="Ulbrich P."/>
            <person name="Vlcek C."/>
            <person name="Paces V."/>
            <person name="Haselkorn R."/>
        </authorList>
    </citation>
    <scope>NUCLEOTIDE SEQUENCE [LARGE SCALE GENOMIC DNA]</scope>
    <source>
        <strain>ATCC BAA-309 / NBRC 16581 / SB1003</strain>
    </source>
</reference>
<gene>
    <name evidence="1" type="primary">cobB</name>
    <name type="ordered locus">RCAP_rcc02032</name>
</gene>
<accession>O68108</accession>
<accession>D5AUZ4</accession>
<comment type="function">
    <text evidence="1">Catalyzes the ATP-dependent amidation of the two carboxylate groups at positions a and c of hydrogenobyrinate, using either L-glutamine or ammonia as the nitrogen source.</text>
</comment>
<comment type="catalytic activity">
    <reaction evidence="1">
        <text>hydrogenobyrinate + 2 L-glutamine + 2 ATP + 2 H2O = hydrogenobyrinate a,c-diamide + 2 L-glutamate + 2 ADP + 2 phosphate + 2 H(+)</text>
        <dbReference type="Rhea" id="RHEA:12544"/>
        <dbReference type="ChEBI" id="CHEBI:15377"/>
        <dbReference type="ChEBI" id="CHEBI:15378"/>
        <dbReference type="ChEBI" id="CHEBI:29985"/>
        <dbReference type="ChEBI" id="CHEBI:30616"/>
        <dbReference type="ChEBI" id="CHEBI:43474"/>
        <dbReference type="ChEBI" id="CHEBI:58359"/>
        <dbReference type="ChEBI" id="CHEBI:77873"/>
        <dbReference type="ChEBI" id="CHEBI:77874"/>
        <dbReference type="ChEBI" id="CHEBI:456216"/>
        <dbReference type="EC" id="6.3.5.9"/>
    </reaction>
</comment>
<comment type="cofactor">
    <cofactor evidence="1">
        <name>Mg(2+)</name>
        <dbReference type="ChEBI" id="CHEBI:18420"/>
    </cofactor>
</comment>
<comment type="pathway">
    <text evidence="1">Cofactor biosynthesis; adenosylcobalamin biosynthesis; cob(II)yrinate a,c-diamide from precorrin-2 (aerobic route): step 9/10.</text>
</comment>
<comment type="domain">
    <text evidence="1">Comprises of two domains. The C-terminal domain contains the binding site for glutamine and catalyzes the hydrolysis of this substrate to glutamate and ammonia. The N-terminal domain is anticipated to bind ATP and hydrogenobyrinate and catalyzes the ultimate synthesis of the diamide product. The ammonia produced via the glutaminase domain is probably translocated to the adjacent domain via a molecular tunnel, where it reacts with an activated intermediate.</text>
</comment>
<comment type="miscellaneous">
    <text evidence="1">The a and c carboxylates of hydrogenobyrinate are activated for nucleophilic attack via formation of a phosphorylated intermediate by ATP. CobB catalyzes first the amidation of the c-carboxylate, and then that of the a-carboxylate.</text>
</comment>
<comment type="similarity">
    <text evidence="1">Belongs to the CobB/CbiA family.</text>
</comment>
<proteinExistence type="inferred from homology"/>
<protein>
    <recommendedName>
        <fullName evidence="1">Hydrogenobyrinate a,c-diamide synthase</fullName>
        <ecNumber evidence="1">6.3.5.9</ecNumber>
    </recommendedName>
    <alternativeName>
        <fullName evidence="1">Hydrogenobyrinic acid a,c-diamide synthase</fullName>
    </alternativeName>
</protein>
<sequence>MSEGPKGLAIAAPASGSGKTTLTLGLLRALTRRGLRVQPFKNGPDYIDPAFHAAAAGRASFNLDGWAMDRPQLHALAGQAAGADLVIFEGAMGLYDGPADPGRSGRGTSAEIARMFGWPVVLVLDVKGQGQSAAATALGFARHPEAPPLAGVILNHVASPRHEAMIRAEMDRLGLRVLGALPRRSDLSLPERHLGLVQAEEQAGLEATLEALADFVAAHVDLEALLSVAGAGPAPGAGAWAVPPAGRIALARDAAFSFVYPHMLEAWRRAGVTVLPFSPLADQAPDPSADLVWLPGGYPELHAGRIAAATRFKAGLRAFAETRSVHGECGGYMVLGARLVDAEGRAHAMAGLLGLVTSYEKRRLHLGYRSADLLAPLPGYGAGSRLYGHEFHYSTILEQPDAPLAKVCDAAGAPVAETGSVRGHVTGSFFHLIAG</sequence>